<keyword id="KW-1003">Cell membrane</keyword>
<keyword id="KW-0249">Electron transport</keyword>
<keyword id="KW-0349">Heme</keyword>
<keyword id="KW-0408">Iron</keyword>
<keyword id="KW-0472">Membrane</keyword>
<keyword id="KW-0479">Metal-binding</keyword>
<keyword id="KW-1185">Reference proteome</keyword>
<keyword id="KW-0677">Repeat</keyword>
<keyword id="KW-0679">Respiratory chain</keyword>
<keyword id="KW-1278">Translocase</keyword>
<keyword id="KW-0812">Transmembrane</keyword>
<keyword id="KW-1133">Transmembrane helix</keyword>
<keyword id="KW-0813">Transport</keyword>
<gene>
    <name type="primary">qcrC</name>
    <name type="ordered locus">DIP1626</name>
</gene>
<dbReference type="EC" id="7.1.1.8" evidence="1"/>
<dbReference type="EMBL" id="BX248358">
    <property type="protein sequence ID" value="CAE50151.1"/>
    <property type="molecule type" value="Genomic_DNA"/>
</dbReference>
<dbReference type="SMR" id="Q6NGA1"/>
<dbReference type="STRING" id="257309.DIP1626"/>
<dbReference type="KEGG" id="cdi:DIP1626"/>
<dbReference type="HOGENOM" id="CLU_086567_0_0_11"/>
<dbReference type="Proteomes" id="UP000002198">
    <property type="component" value="Chromosome"/>
</dbReference>
<dbReference type="GO" id="GO:0005886">
    <property type="term" value="C:plasma membrane"/>
    <property type="evidence" value="ECO:0007669"/>
    <property type="project" value="UniProtKB-SubCell"/>
</dbReference>
<dbReference type="GO" id="GO:0020037">
    <property type="term" value="F:heme binding"/>
    <property type="evidence" value="ECO:0007669"/>
    <property type="project" value="InterPro"/>
</dbReference>
<dbReference type="GO" id="GO:0005506">
    <property type="term" value="F:iron ion binding"/>
    <property type="evidence" value="ECO:0007669"/>
    <property type="project" value="InterPro"/>
</dbReference>
<dbReference type="GO" id="GO:0008121">
    <property type="term" value="F:ubiquinol-cytochrome-c reductase activity"/>
    <property type="evidence" value="ECO:0007669"/>
    <property type="project" value="UniProtKB-EC"/>
</dbReference>
<dbReference type="Gene3D" id="1.10.760.10">
    <property type="entry name" value="Cytochrome c-like domain"/>
    <property type="match status" value="2"/>
</dbReference>
<dbReference type="InterPro" id="IPR009152">
    <property type="entry name" value="bc1_cytC-su"/>
</dbReference>
<dbReference type="InterPro" id="IPR009056">
    <property type="entry name" value="Cyt_c-like_dom"/>
</dbReference>
<dbReference type="InterPro" id="IPR036909">
    <property type="entry name" value="Cyt_c-like_dom_sf"/>
</dbReference>
<dbReference type="InterPro" id="IPR050597">
    <property type="entry name" value="Cytochrome_c_Oxidase_Subunit"/>
</dbReference>
<dbReference type="PANTHER" id="PTHR33751">
    <property type="entry name" value="CBB3-TYPE CYTOCHROME C OXIDASE SUBUNIT FIXP"/>
    <property type="match status" value="1"/>
</dbReference>
<dbReference type="PANTHER" id="PTHR33751:SF13">
    <property type="entry name" value="CYTOCHROME BC1 COMPLEX CYTOCHROME C SUBUNIT"/>
    <property type="match status" value="1"/>
</dbReference>
<dbReference type="Pfam" id="PF00034">
    <property type="entry name" value="Cytochrom_C"/>
    <property type="match status" value="1"/>
</dbReference>
<dbReference type="Pfam" id="PF13442">
    <property type="entry name" value="Cytochrome_CBB3"/>
    <property type="match status" value="1"/>
</dbReference>
<dbReference type="PIRSF" id="PIRSF000007">
    <property type="entry name" value="Ubiq_cycred_cyc"/>
    <property type="match status" value="1"/>
</dbReference>
<dbReference type="SUPFAM" id="SSF46626">
    <property type="entry name" value="Cytochrome c"/>
    <property type="match status" value="2"/>
</dbReference>
<dbReference type="PROSITE" id="PS51007">
    <property type="entry name" value="CYTC"/>
    <property type="match status" value="2"/>
</dbReference>
<name>QCRC_CORDI</name>
<sequence length="281" mass="29735">MTNAKKVRARRKIRRTAAGAMALAVGLTGAGILVNAVTPDAQVATAQQDEQALIQEGKDLYDVACITCHGANLQGVKDRGPSLIGVGSGATYFQVHSGRMPMLRNEAQAKRKTPRYSEAQTLAIAAYVEANGGGPSIVYNKDGSVAMESLRGANYKDGIDPADVARGSDLFRLNCASCHNFTGRGGALSSGKYAPVLDPANEQEIYQAMLTGPQNMPKFSDRQLSADEKKDIIAYIKSAKETPSQGGWNLGGLGPVTEGMMMWLVGIVVLVAAAMWIGSRS</sequence>
<reference key="1">
    <citation type="journal article" date="2003" name="Nucleic Acids Res.">
        <title>The complete genome sequence and analysis of Corynebacterium diphtheriae NCTC13129.</title>
        <authorList>
            <person name="Cerdeno-Tarraga A.-M."/>
            <person name="Efstratiou A."/>
            <person name="Dover L.G."/>
            <person name="Holden M.T.G."/>
            <person name="Pallen M.J."/>
            <person name="Bentley S.D."/>
            <person name="Besra G.S."/>
            <person name="Churcher C.M."/>
            <person name="James K.D."/>
            <person name="De Zoysa A."/>
            <person name="Chillingworth T."/>
            <person name="Cronin A."/>
            <person name="Dowd L."/>
            <person name="Feltwell T."/>
            <person name="Hamlin N."/>
            <person name="Holroyd S."/>
            <person name="Jagels K."/>
            <person name="Moule S."/>
            <person name="Quail M.A."/>
            <person name="Rabbinowitsch E."/>
            <person name="Rutherford K.M."/>
            <person name="Thomson N.R."/>
            <person name="Unwin L."/>
            <person name="Whitehead S."/>
            <person name="Barrell B.G."/>
            <person name="Parkhill J."/>
        </authorList>
    </citation>
    <scope>NUCLEOTIDE SEQUENCE [LARGE SCALE GENOMIC DNA]</scope>
    <source>
        <strain>ATCC 700971 / NCTC 13129 / Biotype gravis</strain>
    </source>
</reference>
<evidence type="ECO:0000250" key="1">
    <source>
        <dbReference type="UniProtKB" id="Q8NNK5"/>
    </source>
</evidence>
<evidence type="ECO:0000255" key="2"/>
<evidence type="ECO:0000255" key="3">
    <source>
        <dbReference type="PROSITE-ProRule" id="PRU00433"/>
    </source>
</evidence>
<organism>
    <name type="scientific">Corynebacterium diphtheriae (strain ATCC 700971 / NCTC 13129 / Biotype gravis)</name>
    <dbReference type="NCBI Taxonomy" id="257309"/>
    <lineage>
        <taxon>Bacteria</taxon>
        <taxon>Bacillati</taxon>
        <taxon>Actinomycetota</taxon>
        <taxon>Actinomycetes</taxon>
        <taxon>Mycobacteriales</taxon>
        <taxon>Corynebacteriaceae</taxon>
        <taxon>Corynebacterium</taxon>
    </lineage>
</organism>
<proteinExistence type="inferred from homology"/>
<feature type="chain" id="PRO_0000108445" description="Cytochrome bc1 complex cytochrome c subunit">
    <location>
        <begin position="1"/>
        <end position="281"/>
    </location>
</feature>
<feature type="transmembrane region" description="Helical" evidence="2">
    <location>
        <begin position="17"/>
        <end position="37"/>
    </location>
</feature>
<feature type="transmembrane region" description="Helical" evidence="2">
    <location>
        <begin position="259"/>
        <end position="279"/>
    </location>
</feature>
<feature type="domain" description="Cytochrome c 1" evidence="3">
    <location>
        <begin position="52"/>
        <end position="132"/>
    </location>
</feature>
<feature type="domain" description="Cytochrome c 2" evidence="3">
    <location>
        <begin position="162"/>
        <end position="240"/>
    </location>
</feature>
<feature type="binding site" description="covalent" evidence="3">
    <location>
        <position position="65"/>
    </location>
    <ligand>
        <name>heme c</name>
        <dbReference type="ChEBI" id="CHEBI:61717"/>
        <label>1</label>
    </ligand>
</feature>
<feature type="binding site" description="covalent" evidence="3">
    <location>
        <position position="68"/>
    </location>
    <ligand>
        <name>heme c</name>
        <dbReference type="ChEBI" id="CHEBI:61717"/>
        <label>1</label>
    </ligand>
</feature>
<feature type="binding site" description="axial binding residue" evidence="3">
    <location>
        <position position="69"/>
    </location>
    <ligand>
        <name>heme c</name>
        <dbReference type="ChEBI" id="CHEBI:61717"/>
        <label>1</label>
    </ligand>
    <ligandPart>
        <name>Fe</name>
        <dbReference type="ChEBI" id="CHEBI:18248"/>
    </ligandPart>
</feature>
<feature type="binding site" description="covalent" evidence="3">
    <location>
        <position position="175"/>
    </location>
    <ligand>
        <name>heme c</name>
        <dbReference type="ChEBI" id="CHEBI:61717"/>
        <label>2</label>
    </ligand>
</feature>
<feature type="binding site" description="covalent" evidence="3">
    <location>
        <position position="178"/>
    </location>
    <ligand>
        <name>heme c</name>
        <dbReference type="ChEBI" id="CHEBI:61717"/>
        <label>2</label>
    </ligand>
</feature>
<feature type="binding site" description="axial binding residue" evidence="3">
    <location>
        <position position="179"/>
    </location>
    <ligand>
        <name>heme c</name>
        <dbReference type="ChEBI" id="CHEBI:61717"/>
        <label>2</label>
    </ligand>
    <ligandPart>
        <name>Fe</name>
        <dbReference type="ChEBI" id="CHEBI:18248"/>
    </ligandPart>
</feature>
<accession>Q6NGA1</accession>
<comment type="function">
    <text evidence="1">Cytochrome c1 subunit of the cytochrome bc1 complex, an essential component of the respiratory electron transport chain required for ATP synthesis. The bc1 complex catalyzes the oxidation of menaquinol and the reduction of cytochrome c in the respiratory chain. The bc1 complex operates through a Q-cycle mechanism that couples electron transfer to generation of the proton gradient that drives ATP synthesis.</text>
</comment>
<comment type="catalytic activity">
    <reaction evidence="1">
        <text>a quinol + 2 Fe(III)-[cytochrome c](out) = a quinone + 2 Fe(II)-[cytochrome c](out) + 2 H(+)(out)</text>
        <dbReference type="Rhea" id="RHEA:11484"/>
        <dbReference type="Rhea" id="RHEA-COMP:10350"/>
        <dbReference type="Rhea" id="RHEA-COMP:14399"/>
        <dbReference type="ChEBI" id="CHEBI:15378"/>
        <dbReference type="ChEBI" id="CHEBI:24646"/>
        <dbReference type="ChEBI" id="CHEBI:29033"/>
        <dbReference type="ChEBI" id="CHEBI:29034"/>
        <dbReference type="ChEBI" id="CHEBI:132124"/>
        <dbReference type="EC" id="7.1.1.8"/>
    </reaction>
</comment>
<comment type="subunit">
    <text evidence="1">The cytochrome bc1 complex is composed of a cytochrome b (QcrB), the Rieske iron-sulfur protein (QcrA) and a diheme cytochrome c (QcrC) subunit. The bc1 complex forms a supercomplex with cytochrome c oxidase (cytochrome aa3).</text>
</comment>
<comment type="subcellular location">
    <subcellularLocation>
        <location evidence="2">Cell membrane</location>
        <topology evidence="2">Multi-pass membrane protein</topology>
    </subcellularLocation>
</comment>
<comment type="PTM">
    <text evidence="1">Binds 2 heme c groups covalently per subunit.</text>
</comment>
<protein>
    <recommendedName>
        <fullName>Cytochrome bc1 complex cytochrome c subunit</fullName>
        <ecNumber evidence="1">7.1.1.8</ecNumber>
    </recommendedName>
    <alternativeName>
        <fullName>Cytochrome bc1 reductase complex subunit Qcrc</fullName>
    </alternativeName>
    <alternativeName>
        <fullName>Menaquinol--cytochrome c reductase cytochrome c subunit</fullName>
    </alternativeName>
</protein>